<evidence type="ECO:0000255" key="1">
    <source>
        <dbReference type="HAMAP-Rule" id="MF_01024"/>
    </source>
</evidence>
<proteinExistence type="inferred from homology"/>
<organism>
    <name type="scientific">Bacteroides fragilis (strain YCH46)</name>
    <dbReference type="NCBI Taxonomy" id="295405"/>
    <lineage>
        <taxon>Bacteria</taxon>
        <taxon>Pseudomonadati</taxon>
        <taxon>Bacteroidota</taxon>
        <taxon>Bacteroidia</taxon>
        <taxon>Bacteroidales</taxon>
        <taxon>Bacteroidaceae</taxon>
        <taxon>Bacteroides</taxon>
    </lineage>
</organism>
<protein>
    <recommendedName>
        <fullName evidence="1">Histidinol dehydrogenase</fullName>
        <shortName evidence="1">HDH</shortName>
        <ecNumber evidence="1">1.1.1.23</ecNumber>
    </recommendedName>
</protein>
<reference key="1">
    <citation type="journal article" date="2004" name="Proc. Natl. Acad. Sci. U.S.A.">
        <title>Genomic analysis of Bacteroides fragilis reveals extensive DNA inversions regulating cell surface adaptation.</title>
        <authorList>
            <person name="Kuwahara T."/>
            <person name="Yamashita A."/>
            <person name="Hirakawa H."/>
            <person name="Nakayama H."/>
            <person name="Toh H."/>
            <person name="Okada N."/>
            <person name="Kuhara S."/>
            <person name="Hattori M."/>
            <person name="Hayashi T."/>
            <person name="Ohnishi Y."/>
        </authorList>
    </citation>
    <scope>NUCLEOTIDE SEQUENCE [LARGE SCALE GENOMIC DNA]</scope>
    <source>
        <strain>YCH46</strain>
    </source>
</reference>
<dbReference type="EC" id="1.1.1.23" evidence="1"/>
<dbReference type="EMBL" id="AP006841">
    <property type="protein sequence ID" value="BAD49934.1"/>
    <property type="molecule type" value="Genomic_DNA"/>
</dbReference>
<dbReference type="RefSeq" id="WP_011203178.1">
    <property type="nucleotide sequence ID" value="NC_006347.1"/>
</dbReference>
<dbReference type="RefSeq" id="YP_100468.1">
    <property type="nucleotide sequence ID" value="NC_006347.1"/>
</dbReference>
<dbReference type="SMR" id="Q64RE7"/>
<dbReference type="STRING" id="295405.BF3189"/>
<dbReference type="KEGG" id="bfr:BF3189"/>
<dbReference type="PATRIC" id="fig|295405.11.peg.3056"/>
<dbReference type="HOGENOM" id="CLU_006732_3_0_10"/>
<dbReference type="OrthoDB" id="9805269at2"/>
<dbReference type="UniPathway" id="UPA00031">
    <property type="reaction ID" value="UER00014"/>
</dbReference>
<dbReference type="Proteomes" id="UP000002197">
    <property type="component" value="Chromosome"/>
</dbReference>
<dbReference type="GO" id="GO:0005829">
    <property type="term" value="C:cytosol"/>
    <property type="evidence" value="ECO:0007669"/>
    <property type="project" value="TreeGrafter"/>
</dbReference>
<dbReference type="GO" id="GO:0004399">
    <property type="term" value="F:histidinol dehydrogenase activity"/>
    <property type="evidence" value="ECO:0007669"/>
    <property type="project" value="UniProtKB-UniRule"/>
</dbReference>
<dbReference type="GO" id="GO:0051287">
    <property type="term" value="F:NAD binding"/>
    <property type="evidence" value="ECO:0007669"/>
    <property type="project" value="InterPro"/>
</dbReference>
<dbReference type="GO" id="GO:0008270">
    <property type="term" value="F:zinc ion binding"/>
    <property type="evidence" value="ECO:0007669"/>
    <property type="project" value="UniProtKB-UniRule"/>
</dbReference>
<dbReference type="GO" id="GO:0000105">
    <property type="term" value="P:L-histidine biosynthetic process"/>
    <property type="evidence" value="ECO:0007669"/>
    <property type="project" value="UniProtKB-UniRule"/>
</dbReference>
<dbReference type="CDD" id="cd06572">
    <property type="entry name" value="Histidinol_dh"/>
    <property type="match status" value="1"/>
</dbReference>
<dbReference type="FunFam" id="3.40.50.1980:FF:000001">
    <property type="entry name" value="Histidinol dehydrogenase"/>
    <property type="match status" value="1"/>
</dbReference>
<dbReference type="FunFam" id="3.40.50.1980:FF:000002">
    <property type="entry name" value="Histidinol dehydrogenase, chloroplastic"/>
    <property type="match status" value="1"/>
</dbReference>
<dbReference type="Gene3D" id="1.20.5.1300">
    <property type="match status" value="1"/>
</dbReference>
<dbReference type="Gene3D" id="3.40.50.1980">
    <property type="entry name" value="Nitrogenase molybdenum iron protein domain"/>
    <property type="match status" value="2"/>
</dbReference>
<dbReference type="HAMAP" id="MF_01024">
    <property type="entry name" value="HisD"/>
    <property type="match status" value="1"/>
</dbReference>
<dbReference type="InterPro" id="IPR016161">
    <property type="entry name" value="Ald_DH/histidinol_DH"/>
</dbReference>
<dbReference type="InterPro" id="IPR001692">
    <property type="entry name" value="Histidinol_DH_CS"/>
</dbReference>
<dbReference type="InterPro" id="IPR022695">
    <property type="entry name" value="Histidinol_DH_monofunct"/>
</dbReference>
<dbReference type="InterPro" id="IPR012131">
    <property type="entry name" value="Hstdl_DH"/>
</dbReference>
<dbReference type="NCBIfam" id="TIGR00069">
    <property type="entry name" value="hisD"/>
    <property type="match status" value="1"/>
</dbReference>
<dbReference type="PANTHER" id="PTHR21256:SF2">
    <property type="entry name" value="HISTIDINE BIOSYNTHESIS TRIFUNCTIONAL PROTEIN"/>
    <property type="match status" value="1"/>
</dbReference>
<dbReference type="PANTHER" id="PTHR21256">
    <property type="entry name" value="HISTIDINOL DEHYDROGENASE HDH"/>
    <property type="match status" value="1"/>
</dbReference>
<dbReference type="Pfam" id="PF00815">
    <property type="entry name" value="Histidinol_dh"/>
    <property type="match status" value="1"/>
</dbReference>
<dbReference type="PIRSF" id="PIRSF000099">
    <property type="entry name" value="Histidinol_dh"/>
    <property type="match status" value="1"/>
</dbReference>
<dbReference type="PRINTS" id="PR00083">
    <property type="entry name" value="HOLDHDRGNASE"/>
</dbReference>
<dbReference type="SUPFAM" id="SSF53720">
    <property type="entry name" value="ALDH-like"/>
    <property type="match status" value="1"/>
</dbReference>
<dbReference type="PROSITE" id="PS00611">
    <property type="entry name" value="HISOL_DEHYDROGENASE"/>
    <property type="match status" value="1"/>
</dbReference>
<feature type="chain" id="PRO_0000135730" description="Histidinol dehydrogenase">
    <location>
        <begin position="1"/>
        <end position="428"/>
    </location>
</feature>
<feature type="active site" description="Proton acceptor" evidence="1">
    <location>
        <position position="322"/>
    </location>
</feature>
<feature type="active site" description="Proton acceptor" evidence="1">
    <location>
        <position position="323"/>
    </location>
</feature>
<feature type="binding site" evidence="1">
    <location>
        <position position="124"/>
    </location>
    <ligand>
        <name>NAD(+)</name>
        <dbReference type="ChEBI" id="CHEBI:57540"/>
    </ligand>
</feature>
<feature type="binding site" evidence="1">
    <location>
        <position position="186"/>
    </location>
    <ligand>
        <name>NAD(+)</name>
        <dbReference type="ChEBI" id="CHEBI:57540"/>
    </ligand>
</feature>
<feature type="binding site" evidence="1">
    <location>
        <position position="209"/>
    </location>
    <ligand>
        <name>NAD(+)</name>
        <dbReference type="ChEBI" id="CHEBI:57540"/>
    </ligand>
</feature>
<feature type="binding site" evidence="1">
    <location>
        <position position="233"/>
    </location>
    <ligand>
        <name>substrate</name>
    </ligand>
</feature>
<feature type="binding site" evidence="1">
    <location>
        <position position="255"/>
    </location>
    <ligand>
        <name>substrate</name>
    </ligand>
</feature>
<feature type="binding site" evidence="1">
    <location>
        <position position="255"/>
    </location>
    <ligand>
        <name>Zn(2+)</name>
        <dbReference type="ChEBI" id="CHEBI:29105"/>
    </ligand>
</feature>
<feature type="binding site" evidence="1">
    <location>
        <position position="258"/>
    </location>
    <ligand>
        <name>substrate</name>
    </ligand>
</feature>
<feature type="binding site" evidence="1">
    <location>
        <position position="258"/>
    </location>
    <ligand>
        <name>Zn(2+)</name>
        <dbReference type="ChEBI" id="CHEBI:29105"/>
    </ligand>
</feature>
<feature type="binding site" evidence="1">
    <location>
        <position position="323"/>
    </location>
    <ligand>
        <name>substrate</name>
    </ligand>
</feature>
<feature type="binding site" evidence="1">
    <location>
        <position position="356"/>
    </location>
    <ligand>
        <name>substrate</name>
    </ligand>
</feature>
<feature type="binding site" evidence="1">
    <location>
        <position position="356"/>
    </location>
    <ligand>
        <name>Zn(2+)</name>
        <dbReference type="ChEBI" id="CHEBI:29105"/>
    </ligand>
</feature>
<feature type="binding site" evidence="1">
    <location>
        <position position="410"/>
    </location>
    <ligand>
        <name>substrate</name>
    </ligand>
</feature>
<feature type="binding site" evidence="1">
    <location>
        <position position="415"/>
    </location>
    <ligand>
        <name>substrate</name>
    </ligand>
</feature>
<feature type="binding site" evidence="1">
    <location>
        <position position="415"/>
    </location>
    <ligand>
        <name>Zn(2+)</name>
        <dbReference type="ChEBI" id="CHEBI:29105"/>
    </ligand>
</feature>
<name>HISX_BACFR</name>
<accession>Q64RE7</accession>
<sequence>MKLIKYPDRSQWNEILKRPVLETENLFDTVRNIINRVRAGGDRVVMECEAVFDKAELTSLAVTSAEIEEAEKEVPIELKAAIYLAKRNIETFHSAQRFEGKKVDTMEGVTCWQKAVAIEKVGLYIPGGTAPLFSTVLMLAIPAKIAGCKEIVLCTPPDKNGKVHPAILFAARLAGVSKIFKVGGVQAIAAMAYGTESIPKVYKIFGPGNQYVTAAKQLVSLRDVAIDMPAGPSEVEVLADESANPVFVAADLLSQAEHGVDSQAMLVTTSEKLQTEVVYEVERQLGYLTRRDIAEKSLANSKLILVKDMEEALELTNAYAPEHLIIETKDYMEVAGQIVNAGSVFLGAFSPESAGDYASGTNHTLPTNGYAKAYSGVSLDSFIRKITFQEILPSGMSAIGPAIEVMAANEHLDAHKNAVTVRLEEIRK</sequence>
<comment type="function">
    <text evidence="1">Catalyzes the sequential NAD-dependent oxidations of L-histidinol to L-histidinaldehyde and then to L-histidine.</text>
</comment>
<comment type="catalytic activity">
    <reaction evidence="1">
        <text>L-histidinol + 2 NAD(+) + H2O = L-histidine + 2 NADH + 3 H(+)</text>
        <dbReference type="Rhea" id="RHEA:20641"/>
        <dbReference type="ChEBI" id="CHEBI:15377"/>
        <dbReference type="ChEBI" id="CHEBI:15378"/>
        <dbReference type="ChEBI" id="CHEBI:57540"/>
        <dbReference type="ChEBI" id="CHEBI:57595"/>
        <dbReference type="ChEBI" id="CHEBI:57699"/>
        <dbReference type="ChEBI" id="CHEBI:57945"/>
        <dbReference type="EC" id="1.1.1.23"/>
    </reaction>
</comment>
<comment type="cofactor">
    <cofactor evidence="1">
        <name>Zn(2+)</name>
        <dbReference type="ChEBI" id="CHEBI:29105"/>
    </cofactor>
    <text evidence="1">Binds 1 zinc ion per subunit.</text>
</comment>
<comment type="pathway">
    <text evidence="1">Amino-acid biosynthesis; L-histidine biosynthesis; L-histidine from 5-phospho-alpha-D-ribose 1-diphosphate: step 9/9.</text>
</comment>
<comment type="similarity">
    <text evidence="1">Belongs to the histidinol dehydrogenase family.</text>
</comment>
<keyword id="KW-0028">Amino-acid biosynthesis</keyword>
<keyword id="KW-0368">Histidine biosynthesis</keyword>
<keyword id="KW-0479">Metal-binding</keyword>
<keyword id="KW-0520">NAD</keyword>
<keyword id="KW-0560">Oxidoreductase</keyword>
<keyword id="KW-0862">Zinc</keyword>
<gene>
    <name evidence="1" type="primary">hisD</name>
    <name type="ordered locus">BF3189</name>
</gene>